<comment type="function">
    <text evidence="1">Snake venom zinc metalloproteinase that inhibits platelet aggregation and degrades fibrinogen.</text>
</comment>
<comment type="cofactor">
    <cofactor evidence="1">
        <name>Zn(2+)</name>
        <dbReference type="ChEBI" id="CHEBI:29105"/>
    </cofactor>
    <text evidence="1">Binds 1 zinc ion per subunit.</text>
</comment>
<comment type="subunit">
    <text evidence="1">Monomer.</text>
</comment>
<comment type="subcellular location">
    <subcellularLocation>
        <location evidence="1">Secreted</location>
    </subcellularLocation>
</comment>
<comment type="tissue specificity">
    <text>Expressed by the venom gland.</text>
</comment>
<comment type="similarity">
    <text evidence="6">Belongs to the venom metalloproteinase (M12B) family. P-III subfamily. P-IIIa sub-subfamily.</text>
</comment>
<dbReference type="EC" id="3.4.24.-"/>
<dbReference type="EMBL" id="EF080830">
    <property type="protein sequence ID" value="ABN72537.1"/>
    <property type="molecule type" value="mRNA"/>
</dbReference>
<dbReference type="SMR" id="A8QL49"/>
<dbReference type="MEROPS" id="M12.159"/>
<dbReference type="GO" id="GO:0005576">
    <property type="term" value="C:extracellular region"/>
    <property type="evidence" value="ECO:0007669"/>
    <property type="project" value="UniProtKB-SubCell"/>
</dbReference>
<dbReference type="GO" id="GO:0043655">
    <property type="term" value="C:host extracellular space"/>
    <property type="evidence" value="ECO:0000250"/>
    <property type="project" value="UniProtKB"/>
</dbReference>
<dbReference type="GO" id="GO:0005886">
    <property type="term" value="C:plasma membrane"/>
    <property type="evidence" value="ECO:0007669"/>
    <property type="project" value="TreeGrafter"/>
</dbReference>
<dbReference type="GO" id="GO:0046872">
    <property type="term" value="F:metal ion binding"/>
    <property type="evidence" value="ECO:0007669"/>
    <property type="project" value="UniProtKB-KW"/>
</dbReference>
<dbReference type="GO" id="GO:0004222">
    <property type="term" value="F:metalloendopeptidase activity"/>
    <property type="evidence" value="ECO:0000250"/>
    <property type="project" value="UniProtKB"/>
</dbReference>
<dbReference type="GO" id="GO:0090729">
    <property type="term" value="F:toxin activity"/>
    <property type="evidence" value="ECO:0007669"/>
    <property type="project" value="UniProtKB-KW"/>
</dbReference>
<dbReference type="GO" id="GO:0006508">
    <property type="term" value="P:proteolysis"/>
    <property type="evidence" value="ECO:0007669"/>
    <property type="project" value="UniProtKB-KW"/>
</dbReference>
<dbReference type="GO" id="GO:0044485">
    <property type="term" value="P:venom-mediated fibrinogenolysis in another organism"/>
    <property type="evidence" value="ECO:0000250"/>
    <property type="project" value="UniProtKB"/>
</dbReference>
<dbReference type="GO" id="GO:0044358">
    <property type="term" value="P:venom-mediated hemorrhage in another organism"/>
    <property type="evidence" value="ECO:0000250"/>
    <property type="project" value="UniProtKB"/>
</dbReference>
<dbReference type="GO" id="GO:0044477">
    <property type="term" value="P:venom-mediated suppression of platelet aggregation"/>
    <property type="evidence" value="ECO:0000250"/>
    <property type="project" value="UniProtKB"/>
</dbReference>
<dbReference type="CDD" id="cd04269">
    <property type="entry name" value="ZnMc_adamalysin_II_like"/>
    <property type="match status" value="1"/>
</dbReference>
<dbReference type="FunFam" id="3.40.390.10:FF:000002">
    <property type="entry name" value="Disintegrin and metalloproteinase domain-containing protein 22"/>
    <property type="match status" value="1"/>
</dbReference>
<dbReference type="FunFam" id="4.10.70.10:FF:000001">
    <property type="entry name" value="Disintegrin and metalloproteinase domain-containing protein 22"/>
    <property type="match status" value="1"/>
</dbReference>
<dbReference type="Gene3D" id="3.40.390.10">
    <property type="entry name" value="Collagenase (Catalytic Domain)"/>
    <property type="match status" value="1"/>
</dbReference>
<dbReference type="Gene3D" id="4.10.70.10">
    <property type="entry name" value="Disintegrin domain"/>
    <property type="match status" value="1"/>
</dbReference>
<dbReference type="InterPro" id="IPR006586">
    <property type="entry name" value="ADAM_Cys-rich"/>
</dbReference>
<dbReference type="InterPro" id="IPR018358">
    <property type="entry name" value="Disintegrin_CS"/>
</dbReference>
<dbReference type="InterPro" id="IPR001762">
    <property type="entry name" value="Disintegrin_dom"/>
</dbReference>
<dbReference type="InterPro" id="IPR036436">
    <property type="entry name" value="Disintegrin_dom_sf"/>
</dbReference>
<dbReference type="InterPro" id="IPR024079">
    <property type="entry name" value="MetalloPept_cat_dom_sf"/>
</dbReference>
<dbReference type="InterPro" id="IPR001590">
    <property type="entry name" value="Peptidase_M12B"/>
</dbReference>
<dbReference type="InterPro" id="IPR002870">
    <property type="entry name" value="Peptidase_M12B_N"/>
</dbReference>
<dbReference type="InterPro" id="IPR034027">
    <property type="entry name" value="Reprolysin_adamalysin"/>
</dbReference>
<dbReference type="PANTHER" id="PTHR11905">
    <property type="entry name" value="ADAM A DISINTEGRIN AND METALLOPROTEASE DOMAIN"/>
    <property type="match status" value="1"/>
</dbReference>
<dbReference type="PANTHER" id="PTHR11905:SF32">
    <property type="entry name" value="DISINTEGRIN AND METALLOPROTEINASE DOMAIN-CONTAINING PROTEIN 28"/>
    <property type="match status" value="1"/>
</dbReference>
<dbReference type="Pfam" id="PF08516">
    <property type="entry name" value="ADAM_CR"/>
    <property type="match status" value="1"/>
</dbReference>
<dbReference type="Pfam" id="PF00200">
    <property type="entry name" value="Disintegrin"/>
    <property type="match status" value="1"/>
</dbReference>
<dbReference type="Pfam" id="PF01562">
    <property type="entry name" value="Pep_M12B_propep"/>
    <property type="match status" value="1"/>
</dbReference>
<dbReference type="Pfam" id="PF01421">
    <property type="entry name" value="Reprolysin"/>
    <property type="match status" value="1"/>
</dbReference>
<dbReference type="PRINTS" id="PR00289">
    <property type="entry name" value="DISINTEGRIN"/>
</dbReference>
<dbReference type="SMART" id="SM00608">
    <property type="entry name" value="ACR"/>
    <property type="match status" value="1"/>
</dbReference>
<dbReference type="SMART" id="SM00050">
    <property type="entry name" value="DISIN"/>
    <property type="match status" value="1"/>
</dbReference>
<dbReference type="SUPFAM" id="SSF57552">
    <property type="entry name" value="Blood coagulation inhibitor (disintegrin)"/>
    <property type="match status" value="1"/>
</dbReference>
<dbReference type="SUPFAM" id="SSF55486">
    <property type="entry name" value="Metalloproteases ('zincins'), catalytic domain"/>
    <property type="match status" value="1"/>
</dbReference>
<dbReference type="PROSITE" id="PS50215">
    <property type="entry name" value="ADAM_MEPRO"/>
    <property type="match status" value="1"/>
</dbReference>
<dbReference type="PROSITE" id="PS00427">
    <property type="entry name" value="DISINTEGRIN_1"/>
    <property type="match status" value="1"/>
</dbReference>
<dbReference type="PROSITE" id="PS50214">
    <property type="entry name" value="DISINTEGRIN_2"/>
    <property type="match status" value="1"/>
</dbReference>
<dbReference type="PROSITE" id="PS00142">
    <property type="entry name" value="ZINC_PROTEASE"/>
    <property type="match status" value="1"/>
</dbReference>
<organism>
    <name type="scientific">Bungarus multicinctus</name>
    <name type="common">Many-banded krait</name>
    <dbReference type="NCBI Taxonomy" id="8616"/>
    <lineage>
        <taxon>Eukaryota</taxon>
        <taxon>Metazoa</taxon>
        <taxon>Chordata</taxon>
        <taxon>Craniata</taxon>
        <taxon>Vertebrata</taxon>
        <taxon>Euteleostomi</taxon>
        <taxon>Lepidosauria</taxon>
        <taxon>Squamata</taxon>
        <taxon>Bifurcata</taxon>
        <taxon>Unidentata</taxon>
        <taxon>Episquamata</taxon>
        <taxon>Toxicofera</taxon>
        <taxon>Serpentes</taxon>
        <taxon>Colubroidea</taxon>
        <taxon>Elapidae</taxon>
        <taxon>Bungarinae</taxon>
        <taxon>Bungarus</taxon>
    </lineage>
</organism>
<accession>A8QL49</accession>
<keyword id="KW-1217">Cell adhesion impairing toxin</keyword>
<keyword id="KW-1015">Disulfide bond</keyword>
<keyword id="KW-1206">Fibrinogenolytic toxin</keyword>
<keyword id="KW-0325">Glycoprotein</keyword>
<keyword id="KW-1199">Hemostasis impairing toxin</keyword>
<keyword id="KW-0378">Hydrolase</keyword>
<keyword id="KW-0479">Metal-binding</keyword>
<keyword id="KW-0482">Metalloprotease</keyword>
<keyword id="KW-1201">Platelet aggregation inhibiting toxin</keyword>
<keyword id="KW-0645">Protease</keyword>
<keyword id="KW-0964">Secreted</keyword>
<keyword id="KW-0732">Signal</keyword>
<keyword id="KW-0800">Toxin</keyword>
<keyword id="KW-0862">Zinc</keyword>
<keyword id="KW-0865">Zymogen</keyword>
<proteinExistence type="evidence at protein level"/>
<protein>
    <recommendedName>
        <fullName>Zinc metalloproteinase-disintegrin-like BmMP</fullName>
        <ecNumber>3.4.24.-</ecNumber>
    </recommendedName>
    <alternativeName>
        <fullName>Snake venom metalloproteinase</fullName>
        <shortName>SVMP</shortName>
    </alternativeName>
</protein>
<evidence type="ECO:0000250" key="1"/>
<evidence type="ECO:0000255" key="2"/>
<evidence type="ECO:0000255" key="3">
    <source>
        <dbReference type="PROSITE-ProRule" id="PRU00068"/>
    </source>
</evidence>
<evidence type="ECO:0000255" key="4">
    <source>
        <dbReference type="PROSITE-ProRule" id="PRU00276"/>
    </source>
</evidence>
<evidence type="ECO:0000255" key="5">
    <source>
        <dbReference type="PROSITE-ProRule" id="PRU10095"/>
    </source>
</evidence>
<evidence type="ECO:0000305" key="6"/>
<feature type="signal peptide" evidence="2">
    <location>
        <begin position="1"/>
        <end position="20"/>
    </location>
</feature>
<feature type="propeptide" id="PRO_0000417637" evidence="1">
    <location>
        <begin position="21"/>
        <end position="188"/>
    </location>
</feature>
<feature type="chain" id="PRO_0000417638" description="Zinc metalloproteinase-disintegrin-like BmMP">
    <location>
        <begin position="189"/>
        <end position="614"/>
    </location>
</feature>
<feature type="domain" description="Peptidase M12B" evidence="4">
    <location>
        <begin position="205"/>
        <end position="401"/>
    </location>
</feature>
<feature type="domain" description="Disintegrin" evidence="3">
    <location>
        <begin position="409"/>
        <end position="495"/>
    </location>
</feature>
<feature type="short sequence motif" description="D/ECD-tripeptide">
    <location>
        <begin position="473"/>
        <end position="475"/>
    </location>
</feature>
<feature type="active site" evidence="4 5">
    <location>
        <position position="342"/>
    </location>
</feature>
<feature type="binding site" evidence="1">
    <location>
        <position position="341"/>
    </location>
    <ligand>
        <name>Zn(2+)</name>
        <dbReference type="ChEBI" id="CHEBI:29105"/>
        <note>catalytic</note>
    </ligand>
</feature>
<feature type="binding site" evidence="1">
    <location>
        <position position="345"/>
    </location>
    <ligand>
        <name>Zn(2+)</name>
        <dbReference type="ChEBI" id="CHEBI:29105"/>
        <note>catalytic</note>
    </ligand>
</feature>
<feature type="binding site" evidence="1">
    <location>
        <position position="351"/>
    </location>
    <ligand>
        <name>Zn(2+)</name>
        <dbReference type="ChEBI" id="CHEBI:29105"/>
        <note>catalytic</note>
    </ligand>
</feature>
<feature type="glycosylation site" description="N-linked (GlcNAc...) asparagine" evidence="2">
    <location>
        <position position="187"/>
    </location>
</feature>
<feature type="disulfide bond" evidence="1">
    <location>
        <begin position="316"/>
        <end position="396"/>
    </location>
</feature>
<feature type="disulfide bond" evidence="1">
    <location>
        <begin position="356"/>
        <end position="380"/>
    </location>
</feature>
<feature type="disulfide bond" evidence="1">
    <location>
        <begin position="359"/>
        <end position="364"/>
    </location>
</feature>
<feature type="disulfide bond" evidence="1">
    <location>
        <begin position="412"/>
        <end position="441"/>
    </location>
</feature>
<feature type="disulfide bond" evidence="1">
    <location>
        <begin position="423"/>
        <end position="436"/>
    </location>
</feature>
<feature type="disulfide bond" evidence="1">
    <location>
        <begin position="425"/>
        <end position="431"/>
    </location>
</feature>
<feature type="disulfide bond" evidence="1">
    <location>
        <begin position="435"/>
        <end position="458"/>
    </location>
</feature>
<feature type="disulfide bond" evidence="1">
    <location>
        <begin position="449"/>
        <end position="455"/>
    </location>
</feature>
<feature type="disulfide bond" evidence="1">
    <location>
        <begin position="454"/>
        <end position="480"/>
    </location>
</feature>
<feature type="disulfide bond" evidence="1">
    <location>
        <begin position="467"/>
        <end position="487"/>
    </location>
</feature>
<feature type="disulfide bond" evidence="1">
    <location>
        <begin position="474"/>
        <end position="506"/>
    </location>
</feature>
<feature type="disulfide bond" evidence="1">
    <location>
        <begin position="499"/>
        <end position="511"/>
    </location>
</feature>
<feature type="disulfide bond" evidence="1">
    <location>
        <begin position="518"/>
        <end position="568"/>
    </location>
</feature>
<feature type="disulfide bond" evidence="1">
    <location>
        <begin position="533"/>
        <end position="576"/>
    </location>
</feature>
<feature type="disulfide bond" evidence="1">
    <location>
        <begin position="546"/>
        <end position="556"/>
    </location>
</feature>
<feature type="disulfide bond" evidence="1">
    <location>
        <begin position="563"/>
        <end position="602"/>
    </location>
</feature>
<feature type="disulfide bond" evidence="1">
    <location>
        <begin position="596"/>
        <end position="607"/>
    </location>
</feature>
<name>VM3_BUNMU</name>
<reference key="1">
    <citation type="journal article" date="2007" name="Toxicon">
        <title>Isolation and cloning of a metalloproteinase from king cobra snake venom.</title>
        <authorList>
            <person name="Guo X.-X."/>
            <person name="Zeng L."/>
            <person name="Lee W.-H."/>
            <person name="Zhang Y."/>
            <person name="Jin Y."/>
        </authorList>
    </citation>
    <scope>NUCLEOTIDE SEQUENCE [MRNA]</scope>
    <source>
        <tissue>Venom gland</tissue>
    </source>
</reference>
<reference key="2">
    <citation type="journal article" date="2013" name="Proc. Natl. Acad. Sci. U.S.A.">
        <title>The king cobra genome reveals dynamic gene evolution and adaptation in the snake venom system.</title>
        <authorList>
            <person name="Vonk F.J."/>
            <person name="Casewell N.R."/>
            <person name="Henkel C.V."/>
            <person name="Heimberg A.M."/>
            <person name="Jansen H.J."/>
            <person name="McCleary R.J."/>
            <person name="Kerkkamp H.M."/>
            <person name="Vos R.A."/>
            <person name="Guerreiro I."/>
            <person name="Calvete J.J."/>
            <person name="Wuster W."/>
            <person name="Woods A.E."/>
            <person name="Logan J.M."/>
            <person name="Harrison R.A."/>
            <person name="Castoe T.A."/>
            <person name="de Koning A.P."/>
            <person name="Pollock D.D."/>
            <person name="Yandell M."/>
            <person name="Calderon D."/>
            <person name="Renjifo C."/>
            <person name="Currier R.B."/>
            <person name="Salgado D."/>
            <person name="Pla D."/>
            <person name="Sanz L."/>
            <person name="Hyder A.S."/>
            <person name="Ribeiro J.M."/>
            <person name="Arntzen J.W."/>
            <person name="van den Thillart G.E."/>
            <person name="Boetzer M."/>
            <person name="Pirovano W."/>
            <person name="Dirks R.P."/>
            <person name="Spaink H.P."/>
            <person name="Duboule D."/>
            <person name="McGlinn E."/>
            <person name="Kini R.M."/>
            <person name="Richardson M.K."/>
        </authorList>
    </citation>
    <scope>IDENTIFICATION BY MASS SPECTROMETRY</scope>
    <source>
        <tissue>Venom</tissue>
    </source>
</reference>
<sequence>MIQALLVTICLAVFPYQGSSIILESGNVNDYEVVYPQKVPLLPKGGVQNPQPKTKYEDTVQYEFEVNGEPVVLHLERNKGLFSEDYTEAHYAPDGREITTRPPVQDHCYYHGYIQNEADSSAAISACDGLKGHFKHQGETYFIEPLKLSDSEAHAIYKDENVEEENETPKICGLTETTWESDEPIRNASLLIYTPEQNRYLKVKKYIEFYVAVDNRMYRHYKRNKPIIKRRVYELVNILNTILRRLNFHIALIGLEIWSKRDKINVQSDVKATLKSFGKWREKKLLPRKRNDNAQLLTRIDFNGNTVGLAALGSLCSVKYSVAVIQDYSKRTSMVASTMAHEMGHNLGINHDRASCTSCGSNKCIMATKRTKPASRFSSCSVREHQRYLLRDRPQCILNKPLITDIVAPAICGNYFVEVGEECDCGSPRDCRSACCNAATCKLKHEAQCDSGECCGKCKFKKVGAKCRAAKDDCDLPERCTGRSAECPTDIFRRNGLPCQNKQGYCYNGKCPTLTNQCIALMGPNVKVSRDSCFTLNQRGKGCGYCRMQNGAKIPCAAKDIKCGKLFCKKRNSGVCNCLILPDDPNYGMVETGTKCGDGMVCSDRKCVKLQTVY</sequence>